<evidence type="ECO:0000305" key="1"/>
<name>HIS7_KLUMA</name>
<gene>
    <name type="primary">HIS3</name>
</gene>
<protein>
    <recommendedName>
        <fullName>Imidazoleglycerol-phosphate dehydratase</fullName>
        <shortName>IGPD</shortName>
        <ecNumber>4.2.1.19</ecNumber>
    </recommendedName>
</protein>
<comment type="catalytic activity">
    <reaction>
        <text>D-erythro-1-(imidazol-4-yl)glycerol 3-phosphate = 3-(imidazol-4-yl)-2-oxopropyl phosphate + H2O</text>
        <dbReference type="Rhea" id="RHEA:11040"/>
        <dbReference type="ChEBI" id="CHEBI:15377"/>
        <dbReference type="ChEBI" id="CHEBI:57766"/>
        <dbReference type="ChEBI" id="CHEBI:58278"/>
        <dbReference type="EC" id="4.2.1.19"/>
    </reaction>
</comment>
<comment type="pathway">
    <text>Amino-acid biosynthesis; L-histidine biosynthesis; L-histidine from 5-phospho-alpha-D-ribose 1-diphosphate: step 6/9.</text>
</comment>
<comment type="similarity">
    <text evidence="1">Belongs to the imidazoleglycerol-phosphate dehydratase family.</text>
</comment>
<feature type="chain" id="PRO_0000158238" description="Imidazoleglycerol-phosphate dehydratase">
    <location>
        <begin position="1"/>
        <end position="221"/>
    </location>
</feature>
<dbReference type="EC" id="4.2.1.19"/>
<dbReference type="EMBL" id="AY303539">
    <property type="protein sequence ID" value="AAQ73313.1"/>
    <property type="molecule type" value="Genomic_DNA"/>
</dbReference>
<dbReference type="SMR" id="Q6JV40"/>
<dbReference type="VEuPathDB" id="FungiDB:KLMA_50038"/>
<dbReference type="UniPathway" id="UPA00031">
    <property type="reaction ID" value="UER00011"/>
</dbReference>
<dbReference type="GO" id="GO:0004424">
    <property type="term" value="F:imidazoleglycerol-phosphate dehydratase activity"/>
    <property type="evidence" value="ECO:0007669"/>
    <property type="project" value="UniProtKB-EC"/>
</dbReference>
<dbReference type="GO" id="GO:0000105">
    <property type="term" value="P:L-histidine biosynthetic process"/>
    <property type="evidence" value="ECO:0007669"/>
    <property type="project" value="UniProtKB-UniPathway"/>
</dbReference>
<dbReference type="CDD" id="cd07914">
    <property type="entry name" value="IGPD"/>
    <property type="match status" value="1"/>
</dbReference>
<dbReference type="FunFam" id="3.30.230.40:FF:000005">
    <property type="entry name" value="Imidazoleglycerol-phosphate dehydratase"/>
    <property type="match status" value="1"/>
</dbReference>
<dbReference type="FunFam" id="3.30.230.40:FF:000001">
    <property type="entry name" value="Imidazoleglycerol-phosphate dehydratase HisB"/>
    <property type="match status" value="1"/>
</dbReference>
<dbReference type="Gene3D" id="3.30.230.40">
    <property type="entry name" value="Imidazole glycerol phosphate dehydratase, domain 1"/>
    <property type="match status" value="2"/>
</dbReference>
<dbReference type="HAMAP" id="MF_00076">
    <property type="entry name" value="HisB"/>
    <property type="match status" value="1"/>
</dbReference>
<dbReference type="InterPro" id="IPR038494">
    <property type="entry name" value="IGPD_sf"/>
</dbReference>
<dbReference type="InterPro" id="IPR000807">
    <property type="entry name" value="ImidazoleglycerolP_deHydtase"/>
</dbReference>
<dbReference type="InterPro" id="IPR020565">
    <property type="entry name" value="ImidazoleglycerP_deHydtase_CS"/>
</dbReference>
<dbReference type="InterPro" id="IPR020568">
    <property type="entry name" value="Ribosomal_Su5_D2-typ_SF"/>
</dbReference>
<dbReference type="PANTHER" id="PTHR23133:SF2">
    <property type="entry name" value="IMIDAZOLEGLYCEROL-PHOSPHATE DEHYDRATASE"/>
    <property type="match status" value="1"/>
</dbReference>
<dbReference type="PANTHER" id="PTHR23133">
    <property type="entry name" value="IMIDAZOLEGLYCEROL-PHOSPHATE DEHYDRATASE HIS7"/>
    <property type="match status" value="1"/>
</dbReference>
<dbReference type="Pfam" id="PF00475">
    <property type="entry name" value="IGPD"/>
    <property type="match status" value="1"/>
</dbReference>
<dbReference type="SUPFAM" id="SSF54211">
    <property type="entry name" value="Ribosomal protein S5 domain 2-like"/>
    <property type="match status" value="2"/>
</dbReference>
<dbReference type="PROSITE" id="PS00955">
    <property type="entry name" value="IGP_DEHYDRATASE_2"/>
    <property type="match status" value="1"/>
</dbReference>
<proteinExistence type="inferred from homology"/>
<sequence>MTYPERKAFVSRITNETKIQIAISLHGGHISIPNSILDRPESDVAKQATGSQIIDIQTGIGFLDHMIHALAKHSGWSLIVECIGDLHIDDHHTTEDWGFGSRTGFKEALGHVRGVRRFGTGFAPLDEALSRAVVDLSNRPFAVIDLGLKREKIGDLSCEMIPHFLESFAEAARVTLHVDCLRGFNDHHRSESAFKALAVAIREAISSNGTNDVPSTKGVLM</sequence>
<accession>Q6JV40</accession>
<keyword id="KW-0028">Amino-acid biosynthesis</keyword>
<keyword id="KW-0368">Histidine biosynthesis</keyword>
<keyword id="KW-0456">Lyase</keyword>
<reference key="1">
    <citation type="submission" date="2003-05" db="EMBL/GenBank/DDBJ databases">
        <title>Cloning the KcHIS3 gene of Kluyveromyces cicerisporus and construction a new host-vector system of KcHIS3.</title>
        <authorList>
            <person name="Zhang J."/>
            <person name="Li Y."/>
            <person name="Yuan H."/>
        </authorList>
    </citation>
    <scope>NUCLEOTIDE SEQUENCE [GENOMIC DNA]</scope>
</reference>
<organism>
    <name type="scientific">Kluyveromyces marxianus</name>
    <name type="common">Yeast</name>
    <name type="synonym">Candida kefyr</name>
    <dbReference type="NCBI Taxonomy" id="4911"/>
    <lineage>
        <taxon>Eukaryota</taxon>
        <taxon>Fungi</taxon>
        <taxon>Dikarya</taxon>
        <taxon>Ascomycota</taxon>
        <taxon>Saccharomycotina</taxon>
        <taxon>Saccharomycetes</taxon>
        <taxon>Saccharomycetales</taxon>
        <taxon>Saccharomycetaceae</taxon>
        <taxon>Kluyveromyces</taxon>
    </lineage>
</organism>